<reference key="1">
    <citation type="journal article" date="2010" name="J. Bacteriol.">
        <title>Genome sequence of the deep-rooted Yersinia pestis strain Angola reveals new insights into the evolution and pangenome of the plague bacterium.</title>
        <authorList>
            <person name="Eppinger M."/>
            <person name="Worsham P.L."/>
            <person name="Nikolich M.P."/>
            <person name="Riley D.R."/>
            <person name="Sebastian Y."/>
            <person name="Mou S."/>
            <person name="Achtman M."/>
            <person name="Lindler L.E."/>
            <person name="Ravel J."/>
        </authorList>
    </citation>
    <scope>NUCLEOTIDE SEQUENCE [LARGE SCALE GENOMIC DNA]</scope>
    <source>
        <strain>Angola</strain>
    </source>
</reference>
<name>PYRG_YERPG</name>
<keyword id="KW-0067">ATP-binding</keyword>
<keyword id="KW-0315">Glutamine amidotransferase</keyword>
<keyword id="KW-0436">Ligase</keyword>
<keyword id="KW-0460">Magnesium</keyword>
<keyword id="KW-0479">Metal-binding</keyword>
<keyword id="KW-0547">Nucleotide-binding</keyword>
<keyword id="KW-0665">Pyrimidine biosynthesis</keyword>
<organism>
    <name type="scientific">Yersinia pestis bv. Antiqua (strain Angola)</name>
    <dbReference type="NCBI Taxonomy" id="349746"/>
    <lineage>
        <taxon>Bacteria</taxon>
        <taxon>Pseudomonadati</taxon>
        <taxon>Pseudomonadota</taxon>
        <taxon>Gammaproteobacteria</taxon>
        <taxon>Enterobacterales</taxon>
        <taxon>Yersiniaceae</taxon>
        <taxon>Yersinia</taxon>
    </lineage>
</organism>
<feature type="chain" id="PRO_1000139609" description="CTP synthase">
    <location>
        <begin position="1"/>
        <end position="545"/>
    </location>
</feature>
<feature type="domain" description="Glutamine amidotransferase type-1" evidence="1">
    <location>
        <begin position="291"/>
        <end position="542"/>
    </location>
</feature>
<feature type="region of interest" description="Amidoligase domain" evidence="1">
    <location>
        <begin position="1"/>
        <end position="266"/>
    </location>
</feature>
<feature type="active site" description="Nucleophile; for glutamine hydrolysis" evidence="1">
    <location>
        <position position="379"/>
    </location>
</feature>
<feature type="active site" evidence="1">
    <location>
        <position position="515"/>
    </location>
</feature>
<feature type="active site" evidence="1">
    <location>
        <position position="517"/>
    </location>
</feature>
<feature type="binding site" evidence="1">
    <location>
        <position position="14"/>
    </location>
    <ligand>
        <name>CTP</name>
        <dbReference type="ChEBI" id="CHEBI:37563"/>
        <note>allosteric inhibitor</note>
    </ligand>
</feature>
<feature type="binding site" evidence="1">
    <location>
        <position position="14"/>
    </location>
    <ligand>
        <name>UTP</name>
        <dbReference type="ChEBI" id="CHEBI:46398"/>
    </ligand>
</feature>
<feature type="binding site" evidence="1">
    <location>
        <begin position="15"/>
        <end position="20"/>
    </location>
    <ligand>
        <name>ATP</name>
        <dbReference type="ChEBI" id="CHEBI:30616"/>
    </ligand>
</feature>
<feature type="binding site" evidence="1">
    <location>
        <position position="72"/>
    </location>
    <ligand>
        <name>ATP</name>
        <dbReference type="ChEBI" id="CHEBI:30616"/>
    </ligand>
</feature>
<feature type="binding site" evidence="1">
    <location>
        <position position="72"/>
    </location>
    <ligand>
        <name>Mg(2+)</name>
        <dbReference type="ChEBI" id="CHEBI:18420"/>
    </ligand>
</feature>
<feature type="binding site" evidence="1">
    <location>
        <position position="140"/>
    </location>
    <ligand>
        <name>Mg(2+)</name>
        <dbReference type="ChEBI" id="CHEBI:18420"/>
    </ligand>
</feature>
<feature type="binding site" evidence="1">
    <location>
        <begin position="147"/>
        <end position="149"/>
    </location>
    <ligand>
        <name>CTP</name>
        <dbReference type="ChEBI" id="CHEBI:37563"/>
        <note>allosteric inhibitor</note>
    </ligand>
</feature>
<feature type="binding site" evidence="1">
    <location>
        <begin position="187"/>
        <end position="192"/>
    </location>
    <ligand>
        <name>CTP</name>
        <dbReference type="ChEBI" id="CHEBI:37563"/>
        <note>allosteric inhibitor</note>
    </ligand>
</feature>
<feature type="binding site" evidence="1">
    <location>
        <begin position="187"/>
        <end position="192"/>
    </location>
    <ligand>
        <name>UTP</name>
        <dbReference type="ChEBI" id="CHEBI:46398"/>
    </ligand>
</feature>
<feature type="binding site" evidence="1">
    <location>
        <position position="223"/>
    </location>
    <ligand>
        <name>CTP</name>
        <dbReference type="ChEBI" id="CHEBI:37563"/>
        <note>allosteric inhibitor</note>
    </ligand>
</feature>
<feature type="binding site" evidence="1">
    <location>
        <position position="223"/>
    </location>
    <ligand>
        <name>UTP</name>
        <dbReference type="ChEBI" id="CHEBI:46398"/>
    </ligand>
</feature>
<feature type="binding site" evidence="1">
    <location>
        <begin position="239"/>
        <end position="241"/>
    </location>
    <ligand>
        <name>ATP</name>
        <dbReference type="ChEBI" id="CHEBI:30616"/>
    </ligand>
</feature>
<feature type="binding site" evidence="1">
    <location>
        <position position="352"/>
    </location>
    <ligand>
        <name>L-glutamine</name>
        <dbReference type="ChEBI" id="CHEBI:58359"/>
    </ligand>
</feature>
<feature type="binding site" evidence="1">
    <location>
        <begin position="380"/>
        <end position="383"/>
    </location>
    <ligand>
        <name>L-glutamine</name>
        <dbReference type="ChEBI" id="CHEBI:58359"/>
    </ligand>
</feature>
<feature type="binding site" evidence="1">
    <location>
        <position position="403"/>
    </location>
    <ligand>
        <name>L-glutamine</name>
        <dbReference type="ChEBI" id="CHEBI:58359"/>
    </ligand>
</feature>
<feature type="binding site" evidence="1">
    <location>
        <position position="470"/>
    </location>
    <ligand>
        <name>L-glutamine</name>
        <dbReference type="ChEBI" id="CHEBI:58359"/>
    </ligand>
</feature>
<dbReference type="EC" id="6.3.4.2" evidence="1"/>
<dbReference type="EMBL" id="CP000901">
    <property type="protein sequence ID" value="ABX86825.1"/>
    <property type="molecule type" value="Genomic_DNA"/>
</dbReference>
<dbReference type="RefSeq" id="WP_002209376.1">
    <property type="nucleotide sequence ID" value="NZ_CP009935.1"/>
</dbReference>
<dbReference type="SMR" id="A9R1D2"/>
<dbReference type="MEROPS" id="C26.964"/>
<dbReference type="GeneID" id="96664251"/>
<dbReference type="KEGG" id="ypg:YpAngola_A0980"/>
<dbReference type="PATRIC" id="fig|349746.12.peg.1931"/>
<dbReference type="UniPathway" id="UPA00159">
    <property type="reaction ID" value="UER00277"/>
</dbReference>
<dbReference type="GO" id="GO:0005829">
    <property type="term" value="C:cytosol"/>
    <property type="evidence" value="ECO:0007669"/>
    <property type="project" value="TreeGrafter"/>
</dbReference>
<dbReference type="GO" id="GO:0005524">
    <property type="term" value="F:ATP binding"/>
    <property type="evidence" value="ECO:0007669"/>
    <property type="project" value="UniProtKB-KW"/>
</dbReference>
<dbReference type="GO" id="GO:0003883">
    <property type="term" value="F:CTP synthase activity"/>
    <property type="evidence" value="ECO:0007669"/>
    <property type="project" value="UniProtKB-UniRule"/>
</dbReference>
<dbReference type="GO" id="GO:0004359">
    <property type="term" value="F:glutaminase activity"/>
    <property type="evidence" value="ECO:0007669"/>
    <property type="project" value="RHEA"/>
</dbReference>
<dbReference type="GO" id="GO:0042802">
    <property type="term" value="F:identical protein binding"/>
    <property type="evidence" value="ECO:0007669"/>
    <property type="project" value="TreeGrafter"/>
</dbReference>
<dbReference type="GO" id="GO:0046872">
    <property type="term" value="F:metal ion binding"/>
    <property type="evidence" value="ECO:0007669"/>
    <property type="project" value="UniProtKB-KW"/>
</dbReference>
<dbReference type="GO" id="GO:0044210">
    <property type="term" value="P:'de novo' CTP biosynthetic process"/>
    <property type="evidence" value="ECO:0007669"/>
    <property type="project" value="UniProtKB-UniRule"/>
</dbReference>
<dbReference type="GO" id="GO:0019856">
    <property type="term" value="P:pyrimidine nucleobase biosynthetic process"/>
    <property type="evidence" value="ECO:0007669"/>
    <property type="project" value="TreeGrafter"/>
</dbReference>
<dbReference type="CDD" id="cd03113">
    <property type="entry name" value="CTPS_N"/>
    <property type="match status" value="1"/>
</dbReference>
<dbReference type="CDD" id="cd01746">
    <property type="entry name" value="GATase1_CTP_Synthase"/>
    <property type="match status" value="1"/>
</dbReference>
<dbReference type="FunFam" id="3.40.50.300:FF:000009">
    <property type="entry name" value="CTP synthase"/>
    <property type="match status" value="1"/>
</dbReference>
<dbReference type="FunFam" id="3.40.50.880:FF:000002">
    <property type="entry name" value="CTP synthase"/>
    <property type="match status" value="1"/>
</dbReference>
<dbReference type="Gene3D" id="3.40.50.880">
    <property type="match status" value="1"/>
</dbReference>
<dbReference type="Gene3D" id="3.40.50.300">
    <property type="entry name" value="P-loop containing nucleotide triphosphate hydrolases"/>
    <property type="match status" value="1"/>
</dbReference>
<dbReference type="HAMAP" id="MF_01227">
    <property type="entry name" value="PyrG"/>
    <property type="match status" value="1"/>
</dbReference>
<dbReference type="InterPro" id="IPR029062">
    <property type="entry name" value="Class_I_gatase-like"/>
</dbReference>
<dbReference type="InterPro" id="IPR004468">
    <property type="entry name" value="CTP_synthase"/>
</dbReference>
<dbReference type="InterPro" id="IPR017456">
    <property type="entry name" value="CTP_synthase_N"/>
</dbReference>
<dbReference type="InterPro" id="IPR017926">
    <property type="entry name" value="GATASE"/>
</dbReference>
<dbReference type="InterPro" id="IPR033828">
    <property type="entry name" value="GATase1_CTP_Synthase"/>
</dbReference>
<dbReference type="InterPro" id="IPR027417">
    <property type="entry name" value="P-loop_NTPase"/>
</dbReference>
<dbReference type="NCBIfam" id="NF003792">
    <property type="entry name" value="PRK05380.1"/>
    <property type="match status" value="1"/>
</dbReference>
<dbReference type="NCBIfam" id="TIGR00337">
    <property type="entry name" value="PyrG"/>
    <property type="match status" value="1"/>
</dbReference>
<dbReference type="PANTHER" id="PTHR11550">
    <property type="entry name" value="CTP SYNTHASE"/>
    <property type="match status" value="1"/>
</dbReference>
<dbReference type="PANTHER" id="PTHR11550:SF0">
    <property type="entry name" value="CTP SYNTHASE-RELATED"/>
    <property type="match status" value="1"/>
</dbReference>
<dbReference type="Pfam" id="PF06418">
    <property type="entry name" value="CTP_synth_N"/>
    <property type="match status" value="1"/>
</dbReference>
<dbReference type="Pfam" id="PF00117">
    <property type="entry name" value="GATase"/>
    <property type="match status" value="1"/>
</dbReference>
<dbReference type="SUPFAM" id="SSF52317">
    <property type="entry name" value="Class I glutamine amidotransferase-like"/>
    <property type="match status" value="1"/>
</dbReference>
<dbReference type="SUPFAM" id="SSF52540">
    <property type="entry name" value="P-loop containing nucleoside triphosphate hydrolases"/>
    <property type="match status" value="1"/>
</dbReference>
<dbReference type="PROSITE" id="PS51273">
    <property type="entry name" value="GATASE_TYPE_1"/>
    <property type="match status" value="1"/>
</dbReference>
<sequence>MTTNYIFVTGGVVSSLGKGIAAASLAAILEARGLNVTIMKLDPYINVDPGTMSPTQHGEVFVTEDGAETDLDLGHYERFIRTKMTRRNNFTTGRIYSEVLRKERRGDYLGATIQVIPHITNAIKERIIEGGEGHDVVLVEIGGTVGDIESLPFLEAIRQMAVDVGREHTLYMHLTLVPYLAAAGEVKTKPTQHSVKELLSIGIQPDVLICRSDRAVPANERAKIALFCNVPEKAVISLKDVDSIYKIPGLLKSQGLDDYICKRFSLTCPEANLAEWEQVLYEESNPGGEVTIGMIGKYVELPDAYKSVIEALKHGGLKNRLTVNIKLIDSQDVETRGEEMLKELDAILIPGGFGYRGVEGKVLAARYAREHNIPYLGICLGMQVALMEFARNVAGMENANSTEFVPDCKYPVVALITEWRDEDGNVEIRTEESDLGGTMRVGGQQCHLTEGSLVRQMYGEPTIVERHRHRYEVNNMLLKQIEAAGLRVAGRSADNKLVEIIELPDHPWFVACQFHPEFTSTPRDGHPLFAGFVKAAGDYQKRQVK</sequence>
<accession>A9R1D2</accession>
<protein>
    <recommendedName>
        <fullName evidence="1">CTP synthase</fullName>
        <ecNumber evidence="1">6.3.4.2</ecNumber>
    </recommendedName>
    <alternativeName>
        <fullName evidence="1">Cytidine 5'-triphosphate synthase</fullName>
    </alternativeName>
    <alternativeName>
        <fullName evidence="1">Cytidine triphosphate synthetase</fullName>
        <shortName evidence="1">CTP synthetase</shortName>
        <shortName evidence="1">CTPS</shortName>
    </alternativeName>
    <alternativeName>
        <fullName evidence="1">UTP--ammonia ligase</fullName>
    </alternativeName>
</protein>
<evidence type="ECO:0000255" key="1">
    <source>
        <dbReference type="HAMAP-Rule" id="MF_01227"/>
    </source>
</evidence>
<proteinExistence type="inferred from homology"/>
<comment type="function">
    <text evidence="1">Catalyzes the ATP-dependent amination of UTP to CTP with either L-glutamine or ammonia as the source of nitrogen. Regulates intracellular CTP levels through interactions with the four ribonucleotide triphosphates.</text>
</comment>
<comment type="catalytic activity">
    <reaction evidence="1">
        <text>UTP + L-glutamine + ATP + H2O = CTP + L-glutamate + ADP + phosphate + 2 H(+)</text>
        <dbReference type="Rhea" id="RHEA:26426"/>
        <dbReference type="ChEBI" id="CHEBI:15377"/>
        <dbReference type="ChEBI" id="CHEBI:15378"/>
        <dbReference type="ChEBI" id="CHEBI:29985"/>
        <dbReference type="ChEBI" id="CHEBI:30616"/>
        <dbReference type="ChEBI" id="CHEBI:37563"/>
        <dbReference type="ChEBI" id="CHEBI:43474"/>
        <dbReference type="ChEBI" id="CHEBI:46398"/>
        <dbReference type="ChEBI" id="CHEBI:58359"/>
        <dbReference type="ChEBI" id="CHEBI:456216"/>
        <dbReference type="EC" id="6.3.4.2"/>
    </reaction>
</comment>
<comment type="catalytic activity">
    <reaction evidence="1">
        <text>L-glutamine + H2O = L-glutamate + NH4(+)</text>
        <dbReference type="Rhea" id="RHEA:15889"/>
        <dbReference type="ChEBI" id="CHEBI:15377"/>
        <dbReference type="ChEBI" id="CHEBI:28938"/>
        <dbReference type="ChEBI" id="CHEBI:29985"/>
        <dbReference type="ChEBI" id="CHEBI:58359"/>
    </reaction>
</comment>
<comment type="catalytic activity">
    <reaction evidence="1">
        <text>UTP + NH4(+) + ATP = CTP + ADP + phosphate + 2 H(+)</text>
        <dbReference type="Rhea" id="RHEA:16597"/>
        <dbReference type="ChEBI" id="CHEBI:15378"/>
        <dbReference type="ChEBI" id="CHEBI:28938"/>
        <dbReference type="ChEBI" id="CHEBI:30616"/>
        <dbReference type="ChEBI" id="CHEBI:37563"/>
        <dbReference type="ChEBI" id="CHEBI:43474"/>
        <dbReference type="ChEBI" id="CHEBI:46398"/>
        <dbReference type="ChEBI" id="CHEBI:456216"/>
    </reaction>
</comment>
<comment type="activity regulation">
    <text evidence="1">Allosterically activated by GTP, when glutamine is the substrate; GTP has no effect on the reaction when ammonia is the substrate. The allosteric effector GTP functions by stabilizing the protein conformation that binds the tetrahedral intermediate(s) formed during glutamine hydrolysis. Inhibited by the product CTP, via allosteric rather than competitive inhibition.</text>
</comment>
<comment type="pathway">
    <text evidence="1">Pyrimidine metabolism; CTP biosynthesis via de novo pathway; CTP from UDP: step 2/2.</text>
</comment>
<comment type="subunit">
    <text evidence="1">Homotetramer.</text>
</comment>
<comment type="miscellaneous">
    <text evidence="1">CTPSs have evolved a hybrid strategy for distinguishing between UTP and CTP. The overlapping regions of the product feedback inhibitory and substrate sites recognize a common feature in both compounds, the triphosphate moiety. To differentiate isosteric substrate and product pyrimidine rings, an additional pocket far from the expected kinase/ligase catalytic site, specifically recognizes the cytosine and ribose portions of the product inhibitor.</text>
</comment>
<comment type="similarity">
    <text evidence="1">Belongs to the CTP synthase family.</text>
</comment>
<gene>
    <name evidence="1" type="primary">pyrG</name>
    <name type="ordered locus">YpAngola_A0980</name>
</gene>